<feature type="chain" id="PRO_0000389604" description="Fibrillarin-like rRNA/tRNA 2'-O-methyltransferase">
    <location>
        <begin position="1"/>
        <end position="205"/>
    </location>
</feature>
<feature type="binding site" evidence="1">
    <location>
        <begin position="60"/>
        <end position="61"/>
    </location>
    <ligand>
        <name>S-adenosyl-L-methionine</name>
        <dbReference type="ChEBI" id="CHEBI:59789"/>
    </ligand>
</feature>
<feature type="binding site" evidence="1">
    <location>
        <begin position="76"/>
        <end position="77"/>
    </location>
    <ligand>
        <name>S-adenosyl-L-methionine</name>
        <dbReference type="ChEBI" id="CHEBI:59789"/>
    </ligand>
</feature>
<feature type="binding site" evidence="1">
    <location>
        <begin position="101"/>
        <end position="102"/>
    </location>
    <ligand>
        <name>S-adenosyl-L-methionine</name>
        <dbReference type="ChEBI" id="CHEBI:59789"/>
    </ligand>
</feature>
<feature type="binding site" evidence="1">
    <location>
        <begin position="121"/>
        <end position="124"/>
    </location>
    <ligand>
        <name>S-adenosyl-L-methionine</name>
        <dbReference type="ChEBI" id="CHEBI:59789"/>
    </ligand>
</feature>
<proteinExistence type="inferred from homology"/>
<gene>
    <name evidence="1" type="primary">flpA</name>
    <name type="ordered locus">Mhun_2264</name>
</gene>
<protein>
    <recommendedName>
        <fullName evidence="1">Fibrillarin-like rRNA/tRNA 2'-O-methyltransferase</fullName>
        <ecNumber evidence="1">2.1.1.-</ecNumber>
    </recommendedName>
</protein>
<name>FLPA_METHJ</name>
<sequence length="205" mass="23118">MIWQDGKLLSPGAVLPGDRVYHGMRIWDPGHSKVAALCHIHGEPPVRNARILYLGAAAGSTVSFLSDYAEVVYAVEFSPRPVRSLIRLARARKNIIPLFEDARYPERYLPFVEPVDLLIQDIAQRDQAEIALRNLIFLKQGGHLILFLKLLSMGTDKKREDRIVEVVNLLEHGGITDPAVLDLDRYHTGHTAVWGIYSLSKNFEK</sequence>
<reference key="1">
    <citation type="journal article" date="2016" name="Stand. Genomic Sci.">
        <title>Complete genome sequence of Methanospirillum hungatei type strain JF1.</title>
        <authorList>
            <person name="Gunsalus R.P."/>
            <person name="Cook L.E."/>
            <person name="Crable B."/>
            <person name="Rohlin L."/>
            <person name="McDonald E."/>
            <person name="Mouttaki H."/>
            <person name="Sieber J.R."/>
            <person name="Poweleit N."/>
            <person name="Zhou H."/>
            <person name="Lapidus A.L."/>
            <person name="Daligault H.E."/>
            <person name="Land M."/>
            <person name="Gilna P."/>
            <person name="Ivanova N."/>
            <person name="Kyrpides N."/>
            <person name="Culley D.E."/>
            <person name="McInerney M.J."/>
        </authorList>
    </citation>
    <scope>NUCLEOTIDE SEQUENCE [LARGE SCALE GENOMIC DNA]</scope>
    <source>
        <strain>ATCC 27890 / DSM 864 / NBRC 100397 / JF-1</strain>
    </source>
</reference>
<dbReference type="EC" id="2.1.1.-" evidence="1"/>
<dbReference type="EMBL" id="CP000254">
    <property type="protein sequence ID" value="ABD41969.1"/>
    <property type="molecule type" value="Genomic_DNA"/>
</dbReference>
<dbReference type="SMR" id="Q2FRP5"/>
<dbReference type="FunCoup" id="Q2FRP5">
    <property type="interactions" value="124"/>
</dbReference>
<dbReference type="STRING" id="323259.Mhun_2264"/>
<dbReference type="EnsemblBacteria" id="ABD41969">
    <property type="protein sequence ID" value="ABD41969"/>
    <property type="gene ID" value="Mhun_2264"/>
</dbReference>
<dbReference type="KEGG" id="mhu:Mhun_2264"/>
<dbReference type="eggNOG" id="arCOG00078">
    <property type="taxonomic scope" value="Archaea"/>
</dbReference>
<dbReference type="HOGENOM" id="CLU_059055_2_0_2"/>
<dbReference type="InParanoid" id="Q2FRP5"/>
<dbReference type="Proteomes" id="UP000001941">
    <property type="component" value="Chromosome"/>
</dbReference>
<dbReference type="GO" id="GO:1990259">
    <property type="term" value="F:histone H2AQ104 methyltransferase activity"/>
    <property type="evidence" value="ECO:0007669"/>
    <property type="project" value="TreeGrafter"/>
</dbReference>
<dbReference type="GO" id="GO:0003723">
    <property type="term" value="F:RNA binding"/>
    <property type="evidence" value="ECO:0007669"/>
    <property type="project" value="UniProtKB-UniRule"/>
</dbReference>
<dbReference type="GO" id="GO:0008649">
    <property type="term" value="F:rRNA methyltransferase activity"/>
    <property type="evidence" value="ECO:0007669"/>
    <property type="project" value="TreeGrafter"/>
</dbReference>
<dbReference type="GO" id="GO:0000494">
    <property type="term" value="P:box C/D sno(s)RNA 3'-end processing"/>
    <property type="evidence" value="ECO:0007669"/>
    <property type="project" value="TreeGrafter"/>
</dbReference>
<dbReference type="GO" id="GO:0008033">
    <property type="term" value="P:tRNA processing"/>
    <property type="evidence" value="ECO:0007669"/>
    <property type="project" value="UniProtKB-UniRule"/>
</dbReference>
<dbReference type="CDD" id="cd02440">
    <property type="entry name" value="AdoMet_MTases"/>
    <property type="match status" value="1"/>
</dbReference>
<dbReference type="Gene3D" id="3.40.50.150">
    <property type="entry name" value="Vaccinia Virus protein VP39"/>
    <property type="match status" value="1"/>
</dbReference>
<dbReference type="HAMAP" id="MF_00351">
    <property type="entry name" value="RNA_methyltransf_FlpA"/>
    <property type="match status" value="1"/>
</dbReference>
<dbReference type="InterPro" id="IPR000692">
    <property type="entry name" value="Fibrillarin"/>
</dbReference>
<dbReference type="InterPro" id="IPR029063">
    <property type="entry name" value="SAM-dependent_MTases_sf"/>
</dbReference>
<dbReference type="NCBIfam" id="NF003276">
    <property type="entry name" value="PRK04266.1-2"/>
    <property type="match status" value="1"/>
</dbReference>
<dbReference type="PANTHER" id="PTHR10335:SF17">
    <property type="entry name" value="FIBRILLARIN"/>
    <property type="match status" value="1"/>
</dbReference>
<dbReference type="PANTHER" id="PTHR10335">
    <property type="entry name" value="RRNA 2-O-METHYLTRANSFERASE FIBRILLARIN"/>
    <property type="match status" value="1"/>
</dbReference>
<dbReference type="Pfam" id="PF01269">
    <property type="entry name" value="Fibrillarin"/>
    <property type="match status" value="1"/>
</dbReference>
<dbReference type="PRINTS" id="PR00052">
    <property type="entry name" value="FIBRILLARIN"/>
</dbReference>
<dbReference type="SMART" id="SM01206">
    <property type="entry name" value="Fibrillarin"/>
    <property type="match status" value="1"/>
</dbReference>
<dbReference type="SUPFAM" id="SSF53335">
    <property type="entry name" value="S-adenosyl-L-methionine-dependent methyltransferases"/>
    <property type="match status" value="1"/>
</dbReference>
<accession>Q2FRP5</accession>
<comment type="function">
    <text evidence="1">Involved in pre-rRNA and tRNA processing. Utilizes the methyl donor S-adenosyl-L-methionine to catalyze the site-specific 2'-hydroxyl methylation of ribose moieties in rRNA and tRNA. Site specificity is provided by a guide RNA that base pairs with the substrate. Methylation occurs at a characteristic distance from the sequence involved in base pairing with the guide RNA.</text>
</comment>
<comment type="subunit">
    <text evidence="1">Interacts with nop5. Component of box C/D small ribonucleoprotein (sRNP) particles that contain rpl7ae, FlpA and nop5, plus a guide RNA.</text>
</comment>
<comment type="similarity">
    <text evidence="1">Belongs to the methyltransferase superfamily. Fibrillarin family.</text>
</comment>
<organism>
    <name type="scientific">Methanospirillum hungatei JF-1 (strain ATCC 27890 / DSM 864 / NBRC 100397 / JF-1)</name>
    <dbReference type="NCBI Taxonomy" id="323259"/>
    <lineage>
        <taxon>Archaea</taxon>
        <taxon>Methanobacteriati</taxon>
        <taxon>Methanobacteriota</taxon>
        <taxon>Stenosarchaea group</taxon>
        <taxon>Methanomicrobia</taxon>
        <taxon>Methanomicrobiales</taxon>
        <taxon>Methanospirillaceae</taxon>
        <taxon>Methanospirillum</taxon>
    </lineage>
</organism>
<keyword id="KW-0489">Methyltransferase</keyword>
<keyword id="KW-1185">Reference proteome</keyword>
<keyword id="KW-0694">RNA-binding</keyword>
<keyword id="KW-0698">rRNA processing</keyword>
<keyword id="KW-0808">Transferase</keyword>
<keyword id="KW-0819">tRNA processing</keyword>
<evidence type="ECO:0000255" key="1">
    <source>
        <dbReference type="HAMAP-Rule" id="MF_00351"/>
    </source>
</evidence>